<reference key="1">
    <citation type="journal article" date="1995" name="DNA Res.">
        <title>Sequence analysis of the genome of the unicellular cyanobacterium Synechocystis sp. strain PCC6803. I. Sequence features in the 1 Mb region from map positions 64% to 92% of the genome.</title>
        <authorList>
            <person name="Kaneko T."/>
            <person name="Tanaka A."/>
            <person name="Sato S."/>
            <person name="Kotani H."/>
            <person name="Sazuka T."/>
            <person name="Miyajima N."/>
            <person name="Sugiura M."/>
            <person name="Tabata S."/>
        </authorList>
    </citation>
    <scope>NUCLEOTIDE SEQUENCE [LARGE SCALE GENOMIC DNA]</scope>
    <source>
        <strain>ATCC 27184 / PCC 6803 / N-1</strain>
    </source>
</reference>
<reference key="2">
    <citation type="journal article" date="1996" name="DNA Res.">
        <title>Sequence analysis of the genome of the unicellular cyanobacterium Synechocystis sp. strain PCC6803. II. Sequence determination of the entire genome and assignment of potential protein-coding regions.</title>
        <authorList>
            <person name="Kaneko T."/>
            <person name="Sato S."/>
            <person name="Kotani H."/>
            <person name="Tanaka A."/>
            <person name="Asamizu E."/>
            <person name="Nakamura Y."/>
            <person name="Miyajima N."/>
            <person name="Hirosawa M."/>
            <person name="Sugiura M."/>
            <person name="Sasamoto S."/>
            <person name="Kimura T."/>
            <person name="Hosouchi T."/>
            <person name="Matsuno A."/>
            <person name="Muraki A."/>
            <person name="Nakazaki N."/>
            <person name="Naruo K."/>
            <person name="Okumura S."/>
            <person name="Shimpo S."/>
            <person name="Takeuchi C."/>
            <person name="Wada T."/>
            <person name="Watanabe A."/>
            <person name="Yamada M."/>
            <person name="Yasuda M."/>
            <person name="Tabata S."/>
        </authorList>
    </citation>
    <scope>NUCLEOTIDE SEQUENCE [LARGE SCALE GENOMIC DNA]</scope>
    <source>
        <strain>ATCC 27184 / PCC 6803 / Kazusa</strain>
    </source>
</reference>
<dbReference type="EMBL" id="BA000022">
    <property type="protein sequence ID" value="BAA10520.1"/>
    <property type="molecule type" value="Genomic_DNA"/>
</dbReference>
<dbReference type="PIR" id="S75785">
    <property type="entry name" value="S75785"/>
</dbReference>
<dbReference type="SMR" id="Q55421"/>
<dbReference type="IntAct" id="Q55421">
    <property type="interactions" value="2"/>
</dbReference>
<dbReference type="STRING" id="1148.gene:10500024"/>
<dbReference type="PaxDb" id="1148-1001274"/>
<dbReference type="EnsemblBacteria" id="BAA10520">
    <property type="protein sequence ID" value="BAA10520"/>
    <property type="gene ID" value="BAA10520"/>
</dbReference>
<dbReference type="KEGG" id="syn:sll0830"/>
<dbReference type="eggNOG" id="COG0480">
    <property type="taxonomic scope" value="Bacteria"/>
</dbReference>
<dbReference type="InParanoid" id="Q55421"/>
<dbReference type="PhylomeDB" id="Q55421"/>
<dbReference type="Proteomes" id="UP000001425">
    <property type="component" value="Chromosome"/>
</dbReference>
<dbReference type="GO" id="GO:0005525">
    <property type="term" value="F:GTP binding"/>
    <property type="evidence" value="ECO:0007669"/>
    <property type="project" value="UniProtKB-KW"/>
</dbReference>
<dbReference type="GO" id="GO:0003924">
    <property type="term" value="F:GTPase activity"/>
    <property type="evidence" value="ECO:0007669"/>
    <property type="project" value="InterPro"/>
</dbReference>
<dbReference type="GO" id="GO:0003746">
    <property type="term" value="F:translation elongation factor activity"/>
    <property type="evidence" value="ECO:0007669"/>
    <property type="project" value="InterPro"/>
</dbReference>
<dbReference type="GO" id="GO:0032790">
    <property type="term" value="P:ribosome disassembly"/>
    <property type="evidence" value="ECO:0000318"/>
    <property type="project" value="GO_Central"/>
</dbReference>
<dbReference type="CDD" id="cd04170">
    <property type="entry name" value="EF-G_bact"/>
    <property type="match status" value="1"/>
</dbReference>
<dbReference type="CDD" id="cd16262">
    <property type="entry name" value="EFG_III"/>
    <property type="match status" value="1"/>
</dbReference>
<dbReference type="CDD" id="cd01434">
    <property type="entry name" value="EFG_mtEFG1_IV"/>
    <property type="match status" value="1"/>
</dbReference>
<dbReference type="CDD" id="cd03713">
    <property type="entry name" value="EFG_mtEFG_C"/>
    <property type="match status" value="1"/>
</dbReference>
<dbReference type="FunFam" id="3.30.230.10:FF:000003">
    <property type="entry name" value="Elongation factor G"/>
    <property type="match status" value="1"/>
</dbReference>
<dbReference type="FunFam" id="3.30.70.240:FF:000001">
    <property type="entry name" value="Elongation factor G"/>
    <property type="match status" value="1"/>
</dbReference>
<dbReference type="FunFam" id="3.40.50.300:FF:002294">
    <property type="entry name" value="Elongation factor G (EF-G)"/>
    <property type="match status" value="1"/>
</dbReference>
<dbReference type="FunFam" id="2.40.30.10:FF:000151">
    <property type="entry name" value="Translation elongation factor EF-G"/>
    <property type="match status" value="1"/>
</dbReference>
<dbReference type="FunFam" id="3.30.70.870:FF:000016">
    <property type="entry name" value="Translation elongation factor G"/>
    <property type="match status" value="1"/>
</dbReference>
<dbReference type="Gene3D" id="3.30.230.10">
    <property type="match status" value="1"/>
</dbReference>
<dbReference type="Gene3D" id="3.30.70.240">
    <property type="match status" value="1"/>
</dbReference>
<dbReference type="Gene3D" id="3.30.70.870">
    <property type="entry name" value="Elongation Factor G (Translational Gtpase), domain 3"/>
    <property type="match status" value="1"/>
</dbReference>
<dbReference type="Gene3D" id="3.40.50.300">
    <property type="entry name" value="P-loop containing nucleotide triphosphate hydrolases"/>
    <property type="match status" value="1"/>
</dbReference>
<dbReference type="Gene3D" id="2.40.30.10">
    <property type="entry name" value="Translation factors"/>
    <property type="match status" value="1"/>
</dbReference>
<dbReference type="InterPro" id="IPR053905">
    <property type="entry name" value="EF-G-like_DII"/>
</dbReference>
<dbReference type="InterPro" id="IPR041095">
    <property type="entry name" value="EFG_II"/>
</dbReference>
<dbReference type="InterPro" id="IPR009022">
    <property type="entry name" value="EFG_III"/>
</dbReference>
<dbReference type="InterPro" id="IPR035647">
    <property type="entry name" value="EFG_III/V"/>
</dbReference>
<dbReference type="InterPro" id="IPR047872">
    <property type="entry name" value="EFG_IV"/>
</dbReference>
<dbReference type="InterPro" id="IPR035649">
    <property type="entry name" value="EFG_V"/>
</dbReference>
<dbReference type="InterPro" id="IPR000640">
    <property type="entry name" value="EFG_V-like"/>
</dbReference>
<dbReference type="InterPro" id="IPR027417">
    <property type="entry name" value="P-loop_NTPase"/>
</dbReference>
<dbReference type="InterPro" id="IPR020568">
    <property type="entry name" value="Ribosomal_Su5_D2-typ_SF"/>
</dbReference>
<dbReference type="InterPro" id="IPR014721">
    <property type="entry name" value="Ribsml_uS5_D2-typ_fold_subgr"/>
</dbReference>
<dbReference type="InterPro" id="IPR000795">
    <property type="entry name" value="T_Tr_GTP-bd_dom"/>
</dbReference>
<dbReference type="InterPro" id="IPR009000">
    <property type="entry name" value="Transl_B-barrel_sf"/>
</dbReference>
<dbReference type="InterPro" id="IPR005517">
    <property type="entry name" value="Transl_elong_EFG/EF2_IV"/>
</dbReference>
<dbReference type="NCBIfam" id="NF009379">
    <property type="entry name" value="PRK12740.1-3"/>
    <property type="match status" value="1"/>
</dbReference>
<dbReference type="NCBIfam" id="NF009381">
    <property type="entry name" value="PRK12740.1-5"/>
    <property type="match status" value="1"/>
</dbReference>
<dbReference type="NCBIfam" id="NF009891">
    <property type="entry name" value="PRK13351.1-1"/>
    <property type="match status" value="1"/>
</dbReference>
<dbReference type="PANTHER" id="PTHR43261:SF7">
    <property type="entry name" value="ELONGATION FACTOR G-LIKE PROTEIN"/>
    <property type="match status" value="1"/>
</dbReference>
<dbReference type="PANTHER" id="PTHR43261">
    <property type="entry name" value="TRANSLATION ELONGATION FACTOR G-RELATED"/>
    <property type="match status" value="1"/>
</dbReference>
<dbReference type="Pfam" id="PF22042">
    <property type="entry name" value="EF-G_D2"/>
    <property type="match status" value="1"/>
</dbReference>
<dbReference type="Pfam" id="PF00679">
    <property type="entry name" value="EFG_C"/>
    <property type="match status" value="1"/>
</dbReference>
<dbReference type="Pfam" id="PF14492">
    <property type="entry name" value="EFG_III"/>
    <property type="match status" value="1"/>
</dbReference>
<dbReference type="Pfam" id="PF03764">
    <property type="entry name" value="EFG_IV"/>
    <property type="match status" value="1"/>
</dbReference>
<dbReference type="Pfam" id="PF00009">
    <property type="entry name" value="GTP_EFTU"/>
    <property type="match status" value="1"/>
</dbReference>
<dbReference type="SMART" id="SM00838">
    <property type="entry name" value="EFG_C"/>
    <property type="match status" value="1"/>
</dbReference>
<dbReference type="SMART" id="SM00889">
    <property type="entry name" value="EFG_IV"/>
    <property type="match status" value="1"/>
</dbReference>
<dbReference type="SUPFAM" id="SSF54980">
    <property type="entry name" value="EF-G C-terminal domain-like"/>
    <property type="match status" value="2"/>
</dbReference>
<dbReference type="SUPFAM" id="SSF52540">
    <property type="entry name" value="P-loop containing nucleoside triphosphate hydrolases"/>
    <property type="match status" value="1"/>
</dbReference>
<dbReference type="SUPFAM" id="SSF54211">
    <property type="entry name" value="Ribosomal protein S5 domain 2-like"/>
    <property type="match status" value="1"/>
</dbReference>
<dbReference type="SUPFAM" id="SSF50447">
    <property type="entry name" value="Translation proteins"/>
    <property type="match status" value="1"/>
</dbReference>
<dbReference type="PROSITE" id="PS51722">
    <property type="entry name" value="G_TR_2"/>
    <property type="match status" value="1"/>
</dbReference>
<organism>
    <name type="scientific">Synechocystis sp. (strain ATCC 27184 / PCC 6803 / Kazusa)</name>
    <dbReference type="NCBI Taxonomy" id="1111708"/>
    <lineage>
        <taxon>Bacteria</taxon>
        <taxon>Bacillati</taxon>
        <taxon>Cyanobacteriota</taxon>
        <taxon>Cyanophyceae</taxon>
        <taxon>Synechococcales</taxon>
        <taxon>Merismopediaceae</taxon>
        <taxon>Synechocystis</taxon>
    </lineage>
</organism>
<evidence type="ECO:0000250" key="1"/>
<evidence type="ECO:0000255" key="2">
    <source>
        <dbReference type="PROSITE-ProRule" id="PRU01059"/>
    </source>
</evidence>
<proteinExistence type="inferred from homology"/>
<feature type="chain" id="PRO_0000091277" description="Elongation factor G-like protein">
    <location>
        <begin position="1"/>
        <end position="669"/>
    </location>
</feature>
<feature type="domain" description="tr-type G" evidence="2">
    <location>
        <begin position="7"/>
        <end position="279"/>
    </location>
</feature>
<feature type="region of interest" description="G1" evidence="2">
    <location>
        <begin position="16"/>
        <end position="23"/>
    </location>
</feature>
<feature type="region of interest" description="G2" evidence="2">
    <location>
        <begin position="59"/>
        <end position="63"/>
    </location>
</feature>
<feature type="region of interest" description="G3" evidence="2">
    <location>
        <begin position="80"/>
        <end position="83"/>
    </location>
</feature>
<feature type="region of interest" description="G4" evidence="2">
    <location>
        <begin position="134"/>
        <end position="137"/>
    </location>
</feature>
<feature type="region of interest" description="G5" evidence="2">
    <location>
        <begin position="257"/>
        <end position="259"/>
    </location>
</feature>
<feature type="binding site" evidence="1">
    <location>
        <begin position="16"/>
        <end position="23"/>
    </location>
    <ligand>
        <name>GTP</name>
        <dbReference type="ChEBI" id="CHEBI:37565"/>
    </ligand>
</feature>
<feature type="binding site" evidence="1">
    <location>
        <begin position="80"/>
        <end position="84"/>
    </location>
    <ligand>
        <name>GTP</name>
        <dbReference type="ChEBI" id="CHEBI:37565"/>
    </ligand>
</feature>
<feature type="binding site" evidence="1">
    <location>
        <begin position="134"/>
        <end position="137"/>
    </location>
    <ligand>
        <name>GTP</name>
        <dbReference type="ChEBI" id="CHEBI:37565"/>
    </ligand>
</feature>
<accession>Q55421</accession>
<sequence length="669" mass="73370">MNNPTNESLRNVAIVGPYGSGKTTLLESVLWVSGSVSRKGNIKDGNTVSDSSPEAKARQMSVEVSVAGIDYENLRLNFLDCPGSIEFAQETYGALVGAGTAVIVCEADVSRVLTLAPLFKFLDDWAIPHLVFINKMDRAKQPFGEVLQALKSVSSRPLIPQQYPIYKGEELQGYIDLITEQAYQYHTGSAADPIALPAELAGAEHQARQEMLEALADFDDRLLEELLEEVEPPQAEIEADFKQELGADLIVPVVLGAAEQDFGVRPLLDVLIKEAPDPSVTAARRSLSTDGSGPVIAQVLKTYFTPQGRLSLARIWQGTLREADSLNGQRLGGIYRLFGNQQTPVQTATVGEIVGLARLENINTGTTLSTADVKPLPFVEPLPPVYGLAIAPEQRKDEVKLSTALGKLVEEDPSLTWEQNTETQEVILWGQGEIHLKVALERLERQYKLPMVSQQPQVPYKETIRKGTEVHGRYKHQTGGHGAFGDVYLTIKPLERGNGFSFSETIVGGVVPKQYIPGVEMGVREYLAKGPLGYPVVDIAVTLTDGSYHNVDSSEQAFKQAARLAMTEGMPQCNPVLLEPILSVNVTTPTEFTSRVLQLVSGHRGQILGYEARSDWKSWDQVAAHLPQAEMQNFIIELRSLTLGVGNFTWQSDHLQEVPDKFAPNLRPD</sequence>
<gene>
    <name type="ordered locus">sll0830</name>
</gene>
<keyword id="KW-0342">GTP-binding</keyword>
<keyword id="KW-0547">Nucleotide-binding</keyword>
<keyword id="KW-1185">Reference proteome</keyword>
<protein>
    <recommendedName>
        <fullName>Elongation factor G-like protein</fullName>
    </recommendedName>
</protein>
<comment type="similarity">
    <text evidence="2">Belongs to the TRAFAC class translation factor GTPase superfamily. Classic translation factor GTPase family. EF-G/EF-2 subfamily.</text>
</comment>
<name>EFGL_SYNY3</name>